<proteinExistence type="evidence at protein level"/>
<reference key="1">
    <citation type="journal article" date="1991" name="J. Gen. Virol.">
        <title>Comparative sequence analysis of the long repeat regions and adjoining parts of the long unique regions in the genomes of herpes simplex viruses types 1 and 2.</title>
        <authorList>
            <person name="McGeoch D.J."/>
            <person name="Cunningham C."/>
            <person name="McIntyre G."/>
            <person name="Dolan A."/>
        </authorList>
    </citation>
    <scope>NUCLEOTIDE SEQUENCE [LARGE SCALE GENOMIC DNA]</scope>
</reference>
<evidence type="ECO:0000255" key="1">
    <source>
        <dbReference type="HAMAP-Rule" id="MF_04017"/>
    </source>
</evidence>
<evidence type="ECO:0000256" key="2">
    <source>
        <dbReference type="SAM" id="MobiDB-lite"/>
    </source>
</evidence>
<sequence>MNAHFANEVQYDLTRDPSSPASLIHVIISSECLAAAGVPLSALVRGRPDGGAAANFRVETQTRAHATGDCTPWRSAFAAYVPADAVGAILAPVIPAHPDLLPRVPSAGGLFVSLPVACDAQGVYDPYTVAALRLAWGPWATCARVLLFSYDELVPPNTRYAADGARLMRLCRHFCRYVARLGAAAPAAATEAAAHLSLGMGESGTPTPQASSVSGGAGPAVVGTPDPPISPEEQLTAPGGDTATAEDVSITQENEEILALVQRAVQDVTRRHPVRARPKHAASGVASGLRQGALVHQAVSGGALGASDAEAVLAGLEPPGGGRFASRGGPRAAGEDVLNDVLTLVPGTAKPRSLVEWLDRGWEALAGGDRPDWLWSRRSISVVLRHHYGTKQRFVVVSYENSVAWGGRRARPPRLSSELATALTEACAAERVVRPHQLSPAAQTALLRRFPALEGPLRHPRPVLQPFDIAAEVAFVARIQIACLRALGHSIRAALQGGPRIFQRLRYDFGPHQSEWLGEVTRRFPVLLENLMRALEGTAPDAFFHTAYALAVLAHLGGQGGRGRRRRLVPLSDDIPARFADSDAHYAFDYYSTSGDTLRLTNRPIAVVIDGDVNGREQSKCRFMEGSPSTAPHRVCEQYLPGESYAYLCLGFNRRLCGLVVFPGGFAFTINTAAYLSLADPVARAVGLRFCRGAATGPGLVR</sequence>
<dbReference type="EMBL" id="Z86099">
    <property type="protein sequence ID" value="CAB06741.1"/>
    <property type="molecule type" value="Genomic_DNA"/>
</dbReference>
<dbReference type="PDB" id="6M6G">
    <property type="method" value="EM"/>
    <property type="resolution" value="5.39 A"/>
    <property type="chains" value="k=1-702"/>
</dbReference>
<dbReference type="PDB" id="6M6H">
    <property type="method" value="EM"/>
    <property type="resolution" value="4.50 A"/>
    <property type="chains" value="G=1-702"/>
</dbReference>
<dbReference type="PDBsum" id="6M6G"/>
<dbReference type="PDBsum" id="6M6H"/>
<dbReference type="EMDB" id="EMD-30123"/>
<dbReference type="EMDB" id="EMD-30124"/>
<dbReference type="SMR" id="P89440"/>
<dbReference type="Proteomes" id="UP000001874">
    <property type="component" value="Segment"/>
</dbReference>
<dbReference type="GO" id="GO:0042025">
    <property type="term" value="C:host cell nucleus"/>
    <property type="evidence" value="ECO:0007669"/>
    <property type="project" value="UniProtKB-SubCell"/>
</dbReference>
<dbReference type="GO" id="GO:0019028">
    <property type="term" value="C:viral capsid"/>
    <property type="evidence" value="ECO:0007669"/>
    <property type="project" value="UniProtKB-KW"/>
</dbReference>
<dbReference type="GO" id="GO:0051276">
    <property type="term" value="P:chromosome organization"/>
    <property type="evidence" value="ECO:0007669"/>
    <property type="project" value="InterPro"/>
</dbReference>
<dbReference type="HAMAP" id="MF_04017">
    <property type="entry name" value="HSV_CVC1"/>
    <property type="match status" value="1"/>
</dbReference>
<dbReference type="InterPro" id="IPR007640">
    <property type="entry name" value="UL17-like"/>
</dbReference>
<dbReference type="Pfam" id="PF04559">
    <property type="entry name" value="Herpes_UL17"/>
    <property type="match status" value="1"/>
</dbReference>
<organismHost>
    <name type="scientific">Homo sapiens</name>
    <name type="common">Human</name>
    <dbReference type="NCBI Taxonomy" id="9606"/>
</organismHost>
<keyword id="KW-0002">3D-structure</keyword>
<keyword id="KW-0167">Capsid protein</keyword>
<keyword id="KW-1048">Host nucleus</keyword>
<keyword id="KW-0426">Late protein</keyword>
<keyword id="KW-1185">Reference proteome</keyword>
<keyword id="KW-0231">Viral genome packaging</keyword>
<keyword id="KW-1188">Viral release from host cell</keyword>
<keyword id="KW-0946">Virion</keyword>
<protein>
    <recommendedName>
        <fullName evidence="1">Capsid vertex component 1</fullName>
    </recommendedName>
</protein>
<comment type="function">
    <text evidence="1">Capsid vertex-specific component that plays a role during viral DNA encapsidation, assuring correct genome cleavage and presumably stabilizing capsids that contain full-length viral genomes.</text>
</comment>
<comment type="subunit">
    <text evidence="1">Interacts (via C-terminus) with capsid vertex component 2/CVC2.</text>
</comment>
<comment type="subcellular location">
    <subcellularLocation>
        <location evidence="1">Virion</location>
    </subcellularLocation>
    <subcellularLocation>
        <location evidence="1">Host nucleus</location>
    </subcellularLocation>
</comment>
<comment type="similarity">
    <text evidence="1">Belongs to the herpesviridae CVC1 protein family.</text>
</comment>
<gene>
    <name evidence="1" type="primary">CVC1</name>
    <name type="ordered locus">UL17</name>
</gene>
<accession>P89440</accession>
<name>CVC1_HHV2H</name>
<feature type="chain" id="PRO_0000406187" description="Capsid vertex component 1">
    <location>
        <begin position="1"/>
        <end position="702"/>
    </location>
</feature>
<feature type="region of interest" description="Disordered" evidence="2">
    <location>
        <begin position="200"/>
        <end position="244"/>
    </location>
</feature>
<feature type="compositionally biased region" description="Low complexity" evidence="2">
    <location>
        <begin position="210"/>
        <end position="224"/>
    </location>
</feature>
<organism>
    <name type="scientific">Human herpesvirus 2 (strain HG52)</name>
    <name type="common">HHV-2</name>
    <name type="synonym">Human herpes simplex virus 2</name>
    <dbReference type="NCBI Taxonomy" id="10315"/>
    <lineage>
        <taxon>Viruses</taxon>
        <taxon>Duplodnaviria</taxon>
        <taxon>Heunggongvirae</taxon>
        <taxon>Peploviricota</taxon>
        <taxon>Herviviricetes</taxon>
        <taxon>Herpesvirales</taxon>
        <taxon>Orthoherpesviridae</taxon>
        <taxon>Alphaherpesvirinae</taxon>
        <taxon>Simplexvirus</taxon>
        <taxon>Simplexvirus humanalpha2</taxon>
        <taxon>Human herpesvirus 2</taxon>
    </lineage>
</organism>